<name>GALM_PONAB</name>
<dbReference type="EC" id="5.1.3.3" evidence="2"/>
<dbReference type="EMBL" id="CR859658">
    <property type="protein sequence ID" value="CAH91819.1"/>
    <property type="molecule type" value="mRNA"/>
</dbReference>
<dbReference type="RefSeq" id="NP_001126052.1">
    <property type="nucleotide sequence ID" value="NM_001132580.2"/>
</dbReference>
<dbReference type="SMR" id="Q5R8U1"/>
<dbReference type="FunCoup" id="Q5R8U1">
    <property type="interactions" value="243"/>
</dbReference>
<dbReference type="STRING" id="9601.ENSPPYP00000013940"/>
<dbReference type="GeneID" id="100173004"/>
<dbReference type="KEGG" id="pon:100173004"/>
<dbReference type="CTD" id="130589"/>
<dbReference type="eggNOG" id="KOG1604">
    <property type="taxonomic scope" value="Eukaryota"/>
</dbReference>
<dbReference type="InParanoid" id="Q5R8U1"/>
<dbReference type="OrthoDB" id="274691at2759"/>
<dbReference type="UniPathway" id="UPA00214"/>
<dbReference type="UniPathway" id="UPA00242"/>
<dbReference type="Proteomes" id="UP000001595">
    <property type="component" value="Unplaced"/>
</dbReference>
<dbReference type="GO" id="GO:0005737">
    <property type="term" value="C:cytoplasm"/>
    <property type="evidence" value="ECO:0007669"/>
    <property type="project" value="UniProtKB-SubCell"/>
</dbReference>
<dbReference type="GO" id="GO:0004034">
    <property type="term" value="F:aldose 1-epimerase activity"/>
    <property type="evidence" value="ECO:0007669"/>
    <property type="project" value="UniProtKB-EC"/>
</dbReference>
<dbReference type="GO" id="GO:0030246">
    <property type="term" value="F:carbohydrate binding"/>
    <property type="evidence" value="ECO:0007669"/>
    <property type="project" value="InterPro"/>
</dbReference>
<dbReference type="GO" id="GO:0033499">
    <property type="term" value="P:galactose catabolic process via UDP-galactose, Leloir pathway"/>
    <property type="evidence" value="ECO:0007669"/>
    <property type="project" value="TreeGrafter"/>
</dbReference>
<dbReference type="GO" id="GO:0006006">
    <property type="term" value="P:glucose metabolic process"/>
    <property type="evidence" value="ECO:0007669"/>
    <property type="project" value="TreeGrafter"/>
</dbReference>
<dbReference type="CDD" id="cd09019">
    <property type="entry name" value="galactose_mutarotase_like"/>
    <property type="match status" value="1"/>
</dbReference>
<dbReference type="FunFam" id="2.70.98.10:FF:000003">
    <property type="entry name" value="Aldose 1-epimerase"/>
    <property type="match status" value="1"/>
</dbReference>
<dbReference type="Gene3D" id="2.70.98.10">
    <property type="match status" value="1"/>
</dbReference>
<dbReference type="InterPro" id="IPR018052">
    <property type="entry name" value="Ald1_epimerase_CS"/>
</dbReference>
<dbReference type="InterPro" id="IPR015443">
    <property type="entry name" value="Aldose_1-epimerase"/>
</dbReference>
<dbReference type="InterPro" id="IPR008183">
    <property type="entry name" value="Aldose_1/G6P_1-epimerase"/>
</dbReference>
<dbReference type="InterPro" id="IPR011013">
    <property type="entry name" value="Gal_mutarotase_sf_dom"/>
</dbReference>
<dbReference type="InterPro" id="IPR047215">
    <property type="entry name" value="Galactose_mutarotase-like"/>
</dbReference>
<dbReference type="InterPro" id="IPR014718">
    <property type="entry name" value="GH-type_carb-bd"/>
</dbReference>
<dbReference type="NCBIfam" id="NF008277">
    <property type="entry name" value="PRK11055.1"/>
    <property type="match status" value="1"/>
</dbReference>
<dbReference type="PANTHER" id="PTHR10091">
    <property type="entry name" value="ALDOSE-1-EPIMERASE"/>
    <property type="match status" value="1"/>
</dbReference>
<dbReference type="PANTHER" id="PTHR10091:SF0">
    <property type="entry name" value="GALACTOSE MUTAROTASE"/>
    <property type="match status" value="1"/>
</dbReference>
<dbReference type="Pfam" id="PF01263">
    <property type="entry name" value="Aldose_epim"/>
    <property type="match status" value="1"/>
</dbReference>
<dbReference type="PIRSF" id="PIRSF005096">
    <property type="entry name" value="GALM"/>
    <property type="match status" value="1"/>
</dbReference>
<dbReference type="SUPFAM" id="SSF74650">
    <property type="entry name" value="Galactose mutarotase-like"/>
    <property type="match status" value="1"/>
</dbReference>
<dbReference type="PROSITE" id="PS00545">
    <property type="entry name" value="ALDOSE_1_EPIMERASE"/>
    <property type="match status" value="1"/>
</dbReference>
<keyword id="KW-0007">Acetylation</keyword>
<keyword id="KW-0119">Carbohydrate metabolism</keyword>
<keyword id="KW-0963">Cytoplasm</keyword>
<keyword id="KW-0413">Isomerase</keyword>
<keyword id="KW-0597">Phosphoprotein</keyword>
<keyword id="KW-1185">Reference proteome</keyword>
<protein>
    <recommendedName>
        <fullName>Galactose mutarotase</fullName>
        <ecNumber evidence="2">5.1.3.3</ecNumber>
    </recommendedName>
    <alternativeName>
        <fullName>Aldose 1-epimerase</fullName>
    </alternativeName>
</protein>
<reference key="1">
    <citation type="submission" date="2004-11" db="EMBL/GenBank/DDBJ databases">
        <authorList>
            <consortium name="The German cDNA consortium"/>
        </authorList>
    </citation>
    <scope>NUCLEOTIDE SEQUENCE [LARGE SCALE MRNA]</scope>
    <source>
        <tissue>Kidney</tissue>
    </source>
</reference>
<organism>
    <name type="scientific">Pongo abelii</name>
    <name type="common">Sumatran orangutan</name>
    <name type="synonym">Pongo pygmaeus abelii</name>
    <dbReference type="NCBI Taxonomy" id="9601"/>
    <lineage>
        <taxon>Eukaryota</taxon>
        <taxon>Metazoa</taxon>
        <taxon>Chordata</taxon>
        <taxon>Craniata</taxon>
        <taxon>Vertebrata</taxon>
        <taxon>Euteleostomi</taxon>
        <taxon>Mammalia</taxon>
        <taxon>Eutheria</taxon>
        <taxon>Euarchontoglires</taxon>
        <taxon>Primates</taxon>
        <taxon>Haplorrhini</taxon>
        <taxon>Catarrhini</taxon>
        <taxon>Hominidae</taxon>
        <taxon>Pongo</taxon>
    </lineage>
</organism>
<feature type="initiator methionine" description="Removed" evidence="2">
    <location>
        <position position="1"/>
    </location>
</feature>
<feature type="chain" id="PRO_0000197436" description="Galactose mutarotase">
    <location>
        <begin position="2"/>
        <end position="342"/>
    </location>
</feature>
<feature type="active site" description="Proton donor" evidence="2">
    <location>
        <position position="176"/>
    </location>
</feature>
<feature type="active site" description="Proton acceptor" evidence="2">
    <location>
        <position position="307"/>
    </location>
</feature>
<feature type="binding site" evidence="2">
    <location>
        <begin position="81"/>
        <end position="82"/>
    </location>
    <ligand>
        <name>beta-D-galactose</name>
        <dbReference type="ChEBI" id="CHEBI:27667"/>
    </ligand>
</feature>
<feature type="binding site" evidence="2">
    <location>
        <position position="107"/>
    </location>
    <ligand>
        <name>beta-D-galactose</name>
        <dbReference type="ChEBI" id="CHEBI:27667"/>
    </ligand>
</feature>
<feature type="binding site" evidence="2">
    <location>
        <begin position="176"/>
        <end position="178"/>
    </location>
    <ligand>
        <name>beta-D-galactose</name>
        <dbReference type="ChEBI" id="CHEBI:27667"/>
    </ligand>
</feature>
<feature type="binding site" evidence="2">
    <location>
        <position position="243"/>
    </location>
    <ligand>
        <name>beta-D-galactose</name>
        <dbReference type="ChEBI" id="CHEBI:27667"/>
    </ligand>
</feature>
<feature type="binding site" evidence="2">
    <location>
        <position position="279"/>
    </location>
    <ligand>
        <name>beta-D-galactose</name>
        <dbReference type="ChEBI" id="CHEBI:27667"/>
    </ligand>
</feature>
<feature type="binding site" evidence="2">
    <location>
        <position position="307"/>
    </location>
    <ligand>
        <name>beta-D-galactose</name>
        <dbReference type="ChEBI" id="CHEBI:27667"/>
    </ligand>
</feature>
<feature type="modified residue" description="N-acetylalanine" evidence="2">
    <location>
        <position position="2"/>
    </location>
</feature>
<feature type="modified residue" description="Phosphoserine" evidence="2">
    <location>
        <position position="14"/>
    </location>
</feature>
<feature type="modified residue" description="Phosphoserine" evidence="1">
    <location>
        <position position="124"/>
    </location>
</feature>
<sequence length="342" mass="37819">MASATRAVFGELPSGGGTVEKFQLQSDLLRVDIISWGCTITALEVKDRQGRSSDVVLGFAELEGYLQKQPYFGAVIGRVANRIAKGTFKVDGKEYHLAINKEPNSLHGGVRGFDKVLWTPRVLSNGIQFSRISPDGEEGYPGELKVWVTYTLDGGELVVNYRAQASQATPVNLTNHSYFNLAGQGSPNIYDHEVTIEADTYLPVDETLIPTGEVAPVQGTAFDLRKPVELGKHLQDFHLNGFDHNFCLKGSKEKHFCARVHHAASGRVLEVYTTQPGVQFYMGNFLDGTLKGKNGAVYPKHSGFCLETQNWPDAVNQPRFPPVLLRPGEEYDHTTWFKFSVA</sequence>
<gene>
    <name type="primary">GALM</name>
</gene>
<comment type="function">
    <text evidence="2">Mutarotase that catalyzes the interconversion of beta-D-galactose and alpha-D-galactose during galactose metabolism. Beta-D-galactose is metabolized in the liver into glucose 1-phosphate, the primary metabolic fuel, by the action of four enzymes that constitute the Leloir pathway: GALM, GALK1 (galactokinase), GALT (galactose-1-phosphate uridylyltransferase) and GALE (UDP-galactose-4'-epimerase). Involved in the maintenance of the equilibrium between the beta- and alpha-anomers of galactose, therefore ensuring a sufficient supply of the alpha-anomer for GALK1. Also active on D-glucose although shows a preference for galactose over glucose.</text>
</comment>
<comment type="catalytic activity">
    <reaction evidence="2">
        <text>alpha-D-galactose = beta-D-galactose</text>
        <dbReference type="Rhea" id="RHEA:28675"/>
        <dbReference type="ChEBI" id="CHEBI:27667"/>
        <dbReference type="ChEBI" id="CHEBI:28061"/>
        <dbReference type="EC" id="5.1.3.3"/>
    </reaction>
    <physiologicalReaction direction="right-to-left" evidence="2">
        <dbReference type="Rhea" id="RHEA:28677"/>
    </physiologicalReaction>
</comment>
<comment type="catalytic activity">
    <reaction evidence="2">
        <text>alpha-D-glucose = beta-D-glucose</text>
        <dbReference type="Rhea" id="RHEA:10264"/>
        <dbReference type="ChEBI" id="CHEBI:15903"/>
        <dbReference type="ChEBI" id="CHEBI:17925"/>
        <dbReference type="EC" id="5.1.3.3"/>
    </reaction>
</comment>
<comment type="pathway">
    <text evidence="2">Carbohydrate metabolism; hexose metabolism.</text>
</comment>
<comment type="pathway">
    <text evidence="2">Carbohydrate metabolism; galactose metabolism.</text>
</comment>
<comment type="subunit">
    <text evidence="2">Monomer.</text>
</comment>
<comment type="subcellular location">
    <subcellularLocation>
        <location evidence="3">Cytoplasm</location>
    </subcellularLocation>
</comment>
<comment type="similarity">
    <text evidence="3">Belongs to the aldose epimerase family.</text>
</comment>
<evidence type="ECO:0000250" key="1">
    <source>
        <dbReference type="UniProtKB" id="Q66HG4"/>
    </source>
</evidence>
<evidence type="ECO:0000250" key="2">
    <source>
        <dbReference type="UniProtKB" id="Q96C23"/>
    </source>
</evidence>
<evidence type="ECO:0000305" key="3"/>
<accession>Q5R8U1</accession>
<proteinExistence type="evidence at transcript level"/>